<reference key="1">
    <citation type="journal article" date="2004" name="Proc. Natl. Acad. Sci. U.S.A.">
        <title>The louse-borne human pathogen Bartonella quintana is a genomic derivative of the zoonotic agent Bartonella henselae.</title>
        <authorList>
            <person name="Alsmark U.C.M."/>
            <person name="Frank A.C."/>
            <person name="Karlberg E.O."/>
            <person name="Legault B.-A."/>
            <person name="Ardell D.H."/>
            <person name="Canbaeck B."/>
            <person name="Eriksson A.-S."/>
            <person name="Naeslund A.K."/>
            <person name="Handley S.A."/>
            <person name="Huvet M."/>
            <person name="La Scola B."/>
            <person name="Holmberg M."/>
            <person name="Andersson S.G.E."/>
        </authorList>
    </citation>
    <scope>NUCLEOTIDE SEQUENCE [LARGE SCALE GENOMIC DNA]</scope>
    <source>
        <strain>Toulouse</strain>
    </source>
</reference>
<feature type="chain" id="PRO_0000172909" description="Dephospho-CoA kinase">
    <location>
        <begin position="1"/>
        <end position="195"/>
    </location>
</feature>
<feature type="domain" description="DPCK" evidence="1">
    <location>
        <begin position="3"/>
        <end position="195"/>
    </location>
</feature>
<feature type="binding site" evidence="1">
    <location>
        <begin position="11"/>
        <end position="16"/>
    </location>
    <ligand>
        <name>ATP</name>
        <dbReference type="ChEBI" id="CHEBI:30616"/>
    </ligand>
</feature>
<proteinExistence type="inferred from homology"/>
<sequence length="195" mass="22131">MKIIGLTGSIAMGKSTAADFFKQAGISVFSADETVHQLYKSKPILSLIEHTFPGVVENGKVNRLKLSKILINDSEKLQTLEEIIHPLVQEKEKEFIDTARQQGKKIVVLDIPLLFEKKGEKRVDSIIVVSAPLAIQKERTMTRPDMNEKKFSFINAKQMPDEKKRERADFIINTGKDLENTHQQVFSIIENLLKN</sequence>
<gene>
    <name evidence="1" type="primary">coaE</name>
    <name type="ordered locus">BQ00040</name>
</gene>
<comment type="function">
    <text evidence="1">Catalyzes the phosphorylation of the 3'-hydroxyl group of dephosphocoenzyme A to form coenzyme A.</text>
</comment>
<comment type="catalytic activity">
    <reaction evidence="1">
        <text>3'-dephospho-CoA + ATP = ADP + CoA + H(+)</text>
        <dbReference type="Rhea" id="RHEA:18245"/>
        <dbReference type="ChEBI" id="CHEBI:15378"/>
        <dbReference type="ChEBI" id="CHEBI:30616"/>
        <dbReference type="ChEBI" id="CHEBI:57287"/>
        <dbReference type="ChEBI" id="CHEBI:57328"/>
        <dbReference type="ChEBI" id="CHEBI:456216"/>
        <dbReference type="EC" id="2.7.1.24"/>
    </reaction>
</comment>
<comment type="pathway">
    <text evidence="1">Cofactor biosynthesis; coenzyme A biosynthesis; CoA from (R)-pantothenate: step 5/5.</text>
</comment>
<comment type="subcellular location">
    <subcellularLocation>
        <location evidence="1">Cytoplasm</location>
    </subcellularLocation>
</comment>
<comment type="similarity">
    <text evidence="1">Belongs to the CoaE family.</text>
</comment>
<name>COAE_BARQU</name>
<protein>
    <recommendedName>
        <fullName evidence="1">Dephospho-CoA kinase</fullName>
        <ecNumber evidence="1">2.7.1.24</ecNumber>
    </recommendedName>
    <alternativeName>
        <fullName evidence="1">Dephosphocoenzyme A kinase</fullName>
    </alternativeName>
</protein>
<dbReference type="EC" id="2.7.1.24" evidence="1"/>
<dbReference type="EMBL" id="BX897700">
    <property type="protein sequence ID" value="CAF25511.1"/>
    <property type="molecule type" value="Genomic_DNA"/>
</dbReference>
<dbReference type="RefSeq" id="WP_011178843.1">
    <property type="nucleotide sequence ID" value="NC_005955.1"/>
</dbReference>
<dbReference type="SMR" id="Q6G1B3"/>
<dbReference type="KEGG" id="bqu:BQ00040"/>
<dbReference type="eggNOG" id="COG0237">
    <property type="taxonomic scope" value="Bacteria"/>
</dbReference>
<dbReference type="HOGENOM" id="CLU_057180_3_0_5"/>
<dbReference type="OrthoDB" id="9812943at2"/>
<dbReference type="UniPathway" id="UPA00241">
    <property type="reaction ID" value="UER00356"/>
</dbReference>
<dbReference type="Proteomes" id="UP000000597">
    <property type="component" value="Chromosome"/>
</dbReference>
<dbReference type="GO" id="GO:0005737">
    <property type="term" value="C:cytoplasm"/>
    <property type="evidence" value="ECO:0007669"/>
    <property type="project" value="UniProtKB-SubCell"/>
</dbReference>
<dbReference type="GO" id="GO:0005524">
    <property type="term" value="F:ATP binding"/>
    <property type="evidence" value="ECO:0007669"/>
    <property type="project" value="UniProtKB-UniRule"/>
</dbReference>
<dbReference type="GO" id="GO:0004140">
    <property type="term" value="F:dephospho-CoA kinase activity"/>
    <property type="evidence" value="ECO:0007669"/>
    <property type="project" value="UniProtKB-UniRule"/>
</dbReference>
<dbReference type="GO" id="GO:0015937">
    <property type="term" value="P:coenzyme A biosynthetic process"/>
    <property type="evidence" value="ECO:0007669"/>
    <property type="project" value="UniProtKB-UniRule"/>
</dbReference>
<dbReference type="CDD" id="cd02022">
    <property type="entry name" value="DPCK"/>
    <property type="match status" value="1"/>
</dbReference>
<dbReference type="Gene3D" id="3.40.50.300">
    <property type="entry name" value="P-loop containing nucleotide triphosphate hydrolases"/>
    <property type="match status" value="1"/>
</dbReference>
<dbReference type="HAMAP" id="MF_00376">
    <property type="entry name" value="Dephospho_CoA_kinase"/>
    <property type="match status" value="1"/>
</dbReference>
<dbReference type="InterPro" id="IPR001977">
    <property type="entry name" value="Depp_CoAkinase"/>
</dbReference>
<dbReference type="InterPro" id="IPR027417">
    <property type="entry name" value="P-loop_NTPase"/>
</dbReference>
<dbReference type="NCBIfam" id="TIGR00152">
    <property type="entry name" value="dephospho-CoA kinase"/>
    <property type="match status" value="1"/>
</dbReference>
<dbReference type="PANTHER" id="PTHR10695:SF46">
    <property type="entry name" value="BIFUNCTIONAL COENZYME A SYNTHASE-RELATED"/>
    <property type="match status" value="1"/>
</dbReference>
<dbReference type="PANTHER" id="PTHR10695">
    <property type="entry name" value="DEPHOSPHO-COA KINASE-RELATED"/>
    <property type="match status" value="1"/>
</dbReference>
<dbReference type="Pfam" id="PF01121">
    <property type="entry name" value="CoaE"/>
    <property type="match status" value="1"/>
</dbReference>
<dbReference type="SUPFAM" id="SSF52540">
    <property type="entry name" value="P-loop containing nucleoside triphosphate hydrolases"/>
    <property type="match status" value="1"/>
</dbReference>
<dbReference type="PROSITE" id="PS51219">
    <property type="entry name" value="DPCK"/>
    <property type="match status" value="1"/>
</dbReference>
<evidence type="ECO:0000255" key="1">
    <source>
        <dbReference type="HAMAP-Rule" id="MF_00376"/>
    </source>
</evidence>
<organism>
    <name type="scientific">Bartonella quintana (strain Toulouse)</name>
    <name type="common">Rochalimaea quintana</name>
    <dbReference type="NCBI Taxonomy" id="283165"/>
    <lineage>
        <taxon>Bacteria</taxon>
        <taxon>Pseudomonadati</taxon>
        <taxon>Pseudomonadota</taxon>
        <taxon>Alphaproteobacteria</taxon>
        <taxon>Hyphomicrobiales</taxon>
        <taxon>Bartonellaceae</taxon>
        <taxon>Bartonella</taxon>
    </lineage>
</organism>
<accession>Q6G1B3</accession>
<keyword id="KW-0067">ATP-binding</keyword>
<keyword id="KW-0173">Coenzyme A biosynthesis</keyword>
<keyword id="KW-0963">Cytoplasm</keyword>
<keyword id="KW-0418">Kinase</keyword>
<keyword id="KW-0547">Nucleotide-binding</keyword>
<keyword id="KW-0808">Transferase</keyword>